<sequence length="495" mass="56790">MSSKVIVTIFGASGDLAKRKLYPSLFRLYQSGNLSKHFAVIGTARRPWSKEYFESVVVESILDLADSTEQAQEFASHFYYQSHDVNDSEHYIALRQLQAELNEKYQAEHNKLFFLSMAPQFFGTIAKHLKSENIVDGKGFERLIVEKPFGTDYATASKLNDELLATFDEEQIFRIDHYLGKEMIQSIFAVRFANLIFENVWNKDFIDNVQITFAERLGVEERGGYYDQSGALRDMVQNHTLQLLSLLAMDKPASFTKDEIRAEKIKVFKNLYHPTDEELKEHFIRGQYRSGKIDGMKYISYRSEPNVNPESTTETFTSGAFFVDSDRFRGVPFFFRTGKRLTEKGTHVNIVFKQMDSIFGEPLAPNILTIYIQPTEGFSLSLNGKQVGEEFNLAPNSLDYRTDATATGASPEPYEKLIYDVLNNNSTNFSHWDEVCASWKLIDRIEKLWAENGAPLHDYKAGSMGPQASFDLLEKFGAKWTWQPDITYRQDGRLE</sequence>
<reference key="1">
    <citation type="journal article" date="2001" name="Science">
        <title>Complete genome sequence of a virulent isolate of Streptococcus pneumoniae.</title>
        <authorList>
            <person name="Tettelin H."/>
            <person name="Nelson K.E."/>
            <person name="Paulsen I.T."/>
            <person name="Eisen J.A."/>
            <person name="Read T.D."/>
            <person name="Peterson S.N."/>
            <person name="Heidelberg J.F."/>
            <person name="DeBoy R.T."/>
            <person name="Haft D.H."/>
            <person name="Dodson R.J."/>
            <person name="Durkin A.S."/>
            <person name="Gwinn M.L."/>
            <person name="Kolonay J.F."/>
            <person name="Nelson W.C."/>
            <person name="Peterson J.D."/>
            <person name="Umayam L.A."/>
            <person name="White O."/>
            <person name="Salzberg S.L."/>
            <person name="Lewis M.R."/>
            <person name="Radune D."/>
            <person name="Holtzapple E.K."/>
            <person name="Khouri H.M."/>
            <person name="Wolf A.M."/>
            <person name="Utterback T.R."/>
            <person name="Hansen C.L."/>
            <person name="McDonald L.A."/>
            <person name="Feldblyum T.V."/>
            <person name="Angiuoli S.V."/>
            <person name="Dickinson T."/>
            <person name="Hickey E.K."/>
            <person name="Holt I.E."/>
            <person name="Loftus B.J."/>
            <person name="Yang F."/>
            <person name="Smith H.O."/>
            <person name="Venter J.C."/>
            <person name="Dougherty B.A."/>
            <person name="Morrison D.A."/>
            <person name="Hollingshead S.K."/>
            <person name="Fraser C.M."/>
        </authorList>
    </citation>
    <scope>NUCLEOTIDE SEQUENCE [LARGE SCALE GENOMIC DNA]</scope>
    <source>
        <strain>ATCC BAA-334 / TIGR4</strain>
    </source>
</reference>
<reference key="2">
    <citation type="journal article" date="1998" name="Mol. Microbiol.">
        <title>Recombinational exchanges at the capsular polysaccharide biosynthetic locus lead to frequent serotype changes among natural isolates of Streptococcus pneumoniae.</title>
        <authorList>
            <person name="Coffey T.J."/>
            <person name="Enright M.C."/>
            <person name="Daniels M."/>
            <person name="Morona J.K."/>
            <person name="Morona R."/>
            <person name="Hryniewicz W."/>
            <person name="Paton J.C."/>
            <person name="Spratt B.G."/>
        </authorList>
    </citation>
    <scope>NUCLEOTIDE SEQUENCE [GENOMIC DNA] OF 281-433</scope>
    <source>
        <strain>ATCC 6323</strain>
    </source>
</reference>
<reference key="3">
    <citation type="journal article" date="1998" name="Microb. Drug Resist.">
        <title>Serotype 19A variants of the Spanish serotype 23F multiresistant clone of Streptococcus pneumoniae.</title>
        <authorList>
            <person name="Coffey T.J."/>
            <person name="Enright M.C."/>
            <person name="Daniels M."/>
            <person name="Wilkinson P."/>
            <person name="Berron S."/>
            <person name="Fenoll A."/>
            <person name="Spratt B.G."/>
        </authorList>
    </citation>
    <scope>NUCLEOTIDE SEQUENCE [GENOMIC DNA] OF 281-433</scope>
</reference>
<keyword id="KW-0119">Carbohydrate metabolism</keyword>
<keyword id="KW-0313">Glucose metabolism</keyword>
<keyword id="KW-0521">NADP</keyword>
<keyword id="KW-0560">Oxidoreductase</keyword>
<keyword id="KW-1185">Reference proteome</keyword>
<gene>
    <name evidence="1" type="primary">zwf</name>
    <name type="ordered locus">SP_1243</name>
</gene>
<evidence type="ECO:0000255" key="1">
    <source>
        <dbReference type="HAMAP-Rule" id="MF_00966"/>
    </source>
</evidence>
<evidence type="ECO:0000305" key="2"/>
<accession>O54537</accession>
<dbReference type="EC" id="1.1.1.49" evidence="1"/>
<dbReference type="EMBL" id="AE005672">
    <property type="protein sequence ID" value="AAK75348.1"/>
    <property type="molecule type" value="Genomic_DNA"/>
</dbReference>
<dbReference type="EMBL" id="Z99802">
    <property type="protein sequence ID" value="CAB16927.1"/>
    <property type="molecule type" value="Genomic_DNA"/>
</dbReference>
<dbReference type="EMBL" id="Z99865">
    <property type="protein sequence ID" value="CAB16990.1"/>
    <property type="molecule type" value="Genomic_DNA"/>
</dbReference>
<dbReference type="PIR" id="C95144">
    <property type="entry name" value="C95144"/>
</dbReference>
<dbReference type="RefSeq" id="WP_000096161.1">
    <property type="nucleotide sequence ID" value="NZ_CP155539.1"/>
</dbReference>
<dbReference type="SMR" id="O54537"/>
<dbReference type="PaxDb" id="170187-SP_1243"/>
<dbReference type="EnsemblBacteria" id="AAK75348">
    <property type="protein sequence ID" value="AAK75348"/>
    <property type="gene ID" value="SP_1243"/>
</dbReference>
<dbReference type="KEGG" id="spn:SP_1243"/>
<dbReference type="eggNOG" id="COG0364">
    <property type="taxonomic scope" value="Bacteria"/>
</dbReference>
<dbReference type="PhylomeDB" id="O54537"/>
<dbReference type="BioCyc" id="SPNE170187:G1FZB-1257-MONOMER"/>
<dbReference type="UniPathway" id="UPA00115">
    <property type="reaction ID" value="UER00408"/>
</dbReference>
<dbReference type="Proteomes" id="UP000000585">
    <property type="component" value="Chromosome"/>
</dbReference>
<dbReference type="GO" id="GO:0005829">
    <property type="term" value="C:cytosol"/>
    <property type="evidence" value="ECO:0007669"/>
    <property type="project" value="TreeGrafter"/>
</dbReference>
<dbReference type="GO" id="GO:0004345">
    <property type="term" value="F:glucose-6-phosphate dehydrogenase activity"/>
    <property type="evidence" value="ECO:0007669"/>
    <property type="project" value="UniProtKB-UniRule"/>
</dbReference>
<dbReference type="GO" id="GO:0050661">
    <property type="term" value="F:NADP binding"/>
    <property type="evidence" value="ECO:0007669"/>
    <property type="project" value="UniProtKB-UniRule"/>
</dbReference>
<dbReference type="GO" id="GO:0006006">
    <property type="term" value="P:glucose metabolic process"/>
    <property type="evidence" value="ECO:0007669"/>
    <property type="project" value="UniProtKB-KW"/>
</dbReference>
<dbReference type="GO" id="GO:0009051">
    <property type="term" value="P:pentose-phosphate shunt, oxidative branch"/>
    <property type="evidence" value="ECO:0007669"/>
    <property type="project" value="TreeGrafter"/>
</dbReference>
<dbReference type="Gene3D" id="3.30.360.10">
    <property type="entry name" value="Dihydrodipicolinate Reductase, domain 2"/>
    <property type="match status" value="1"/>
</dbReference>
<dbReference type="Gene3D" id="3.40.50.720">
    <property type="entry name" value="NAD(P)-binding Rossmann-like Domain"/>
    <property type="match status" value="1"/>
</dbReference>
<dbReference type="HAMAP" id="MF_00966">
    <property type="entry name" value="G6PD"/>
    <property type="match status" value="1"/>
</dbReference>
<dbReference type="InterPro" id="IPR001282">
    <property type="entry name" value="G6P_DH"/>
</dbReference>
<dbReference type="InterPro" id="IPR019796">
    <property type="entry name" value="G6P_DH_AS"/>
</dbReference>
<dbReference type="InterPro" id="IPR022675">
    <property type="entry name" value="G6P_DH_C"/>
</dbReference>
<dbReference type="InterPro" id="IPR022674">
    <property type="entry name" value="G6P_DH_NAD-bd"/>
</dbReference>
<dbReference type="InterPro" id="IPR036291">
    <property type="entry name" value="NAD(P)-bd_dom_sf"/>
</dbReference>
<dbReference type="NCBIfam" id="TIGR00871">
    <property type="entry name" value="zwf"/>
    <property type="match status" value="1"/>
</dbReference>
<dbReference type="PANTHER" id="PTHR23429:SF0">
    <property type="entry name" value="GLUCOSE-6-PHOSPHATE 1-DEHYDROGENASE"/>
    <property type="match status" value="1"/>
</dbReference>
<dbReference type="PANTHER" id="PTHR23429">
    <property type="entry name" value="GLUCOSE-6-PHOSPHATE 1-DEHYDROGENASE G6PD"/>
    <property type="match status" value="1"/>
</dbReference>
<dbReference type="Pfam" id="PF02781">
    <property type="entry name" value="G6PD_C"/>
    <property type="match status" value="1"/>
</dbReference>
<dbReference type="Pfam" id="PF00479">
    <property type="entry name" value="G6PD_N"/>
    <property type="match status" value="1"/>
</dbReference>
<dbReference type="PIRSF" id="PIRSF000110">
    <property type="entry name" value="G6PD"/>
    <property type="match status" value="1"/>
</dbReference>
<dbReference type="PRINTS" id="PR00079">
    <property type="entry name" value="G6PDHDRGNASE"/>
</dbReference>
<dbReference type="SUPFAM" id="SSF55347">
    <property type="entry name" value="Glyceraldehyde-3-phosphate dehydrogenase-like, C-terminal domain"/>
    <property type="match status" value="1"/>
</dbReference>
<dbReference type="SUPFAM" id="SSF51735">
    <property type="entry name" value="NAD(P)-binding Rossmann-fold domains"/>
    <property type="match status" value="1"/>
</dbReference>
<dbReference type="PROSITE" id="PS00069">
    <property type="entry name" value="G6P_DEHYDROGENASE"/>
    <property type="match status" value="1"/>
</dbReference>
<proteinExistence type="inferred from homology"/>
<comment type="function">
    <text evidence="1">Catalyzes the oxidation of glucose 6-phosphate to 6-phosphogluconolactone.</text>
</comment>
<comment type="catalytic activity">
    <reaction evidence="1">
        <text>D-glucose 6-phosphate + NADP(+) = 6-phospho-D-glucono-1,5-lactone + NADPH + H(+)</text>
        <dbReference type="Rhea" id="RHEA:15841"/>
        <dbReference type="ChEBI" id="CHEBI:15378"/>
        <dbReference type="ChEBI" id="CHEBI:57783"/>
        <dbReference type="ChEBI" id="CHEBI:57955"/>
        <dbReference type="ChEBI" id="CHEBI:58349"/>
        <dbReference type="ChEBI" id="CHEBI:61548"/>
        <dbReference type="EC" id="1.1.1.49"/>
    </reaction>
</comment>
<comment type="pathway">
    <text evidence="1">Carbohydrate degradation; pentose phosphate pathway; D-ribulose 5-phosphate from D-glucose 6-phosphate (oxidative stage): step 1/3.</text>
</comment>
<comment type="similarity">
    <text evidence="1">Belongs to the glucose-6-phosphate dehydrogenase family.</text>
</comment>
<organism>
    <name type="scientific">Streptococcus pneumoniae serotype 4 (strain ATCC BAA-334 / TIGR4)</name>
    <dbReference type="NCBI Taxonomy" id="170187"/>
    <lineage>
        <taxon>Bacteria</taxon>
        <taxon>Bacillati</taxon>
        <taxon>Bacillota</taxon>
        <taxon>Bacilli</taxon>
        <taxon>Lactobacillales</taxon>
        <taxon>Streptococcaceae</taxon>
        <taxon>Streptococcus</taxon>
    </lineage>
</organism>
<protein>
    <recommendedName>
        <fullName evidence="1">Glucose-6-phosphate 1-dehydrogenase</fullName>
        <shortName evidence="1">G6PD</shortName>
        <ecNumber evidence="1">1.1.1.49</ecNumber>
    </recommendedName>
</protein>
<feature type="chain" id="PRO_0000068133" description="Glucose-6-phosphate 1-dehydrogenase">
    <location>
        <begin position="1"/>
        <end position="495"/>
    </location>
</feature>
<feature type="active site" description="Proton acceptor" evidence="1">
    <location>
        <position position="239"/>
    </location>
</feature>
<feature type="binding site" evidence="1">
    <location>
        <begin position="11"/>
        <end position="18"/>
    </location>
    <ligand>
        <name>NADP(+)</name>
        <dbReference type="ChEBI" id="CHEBI:58349"/>
    </ligand>
</feature>
<feature type="binding site" evidence="1">
    <location>
        <position position="45"/>
    </location>
    <ligand>
        <name>NADP(+)</name>
        <dbReference type="ChEBI" id="CHEBI:58349"/>
    </ligand>
</feature>
<feature type="binding site" evidence="1">
    <location>
        <begin position="84"/>
        <end position="85"/>
    </location>
    <ligand>
        <name>NADP(+)</name>
        <dbReference type="ChEBI" id="CHEBI:58349"/>
    </ligand>
</feature>
<feature type="binding site" evidence="1">
    <location>
        <position position="147"/>
    </location>
    <ligand>
        <name>NADP(+)</name>
        <dbReference type="ChEBI" id="CHEBI:58349"/>
    </ligand>
</feature>
<feature type="binding site" evidence="1">
    <location>
        <position position="177"/>
    </location>
    <ligand>
        <name>substrate</name>
    </ligand>
</feature>
<feature type="binding site" evidence="1">
    <location>
        <position position="181"/>
    </location>
    <ligand>
        <name>substrate</name>
    </ligand>
</feature>
<feature type="binding site" evidence="1">
    <location>
        <position position="215"/>
    </location>
    <ligand>
        <name>substrate</name>
    </ligand>
</feature>
<feature type="binding site" evidence="1">
    <location>
        <position position="234"/>
    </location>
    <ligand>
        <name>substrate</name>
    </ligand>
</feature>
<feature type="binding site" evidence="1">
    <location>
        <position position="339"/>
    </location>
    <ligand>
        <name>substrate</name>
    </ligand>
</feature>
<feature type="binding site" evidence="1">
    <location>
        <position position="344"/>
    </location>
    <ligand>
        <name>substrate</name>
    </ligand>
</feature>
<feature type="sequence conflict" description="In Ref. 2 and 3." evidence="2" ref="2 3">
    <original>V</original>
    <variation>I</variation>
    <location>
        <position position="348"/>
    </location>
</feature>
<name>G6PD_STRPN</name>